<sequence length="246" mass="27057">MSKRTIQLNCDMGESFGVWTMGADEEVMPWIDMANIACGFHASDPHVMSRTIDLALEHEVMIGAHPSYPDLQGFGRRSLAMNEQEVSEIILYQVGALKALCESKNGQLSYVKPHGALYNDMMSDPSIFRAVVDAVSCFNLPLMVLASANNQDYLDIADRFDVPLLFEAFADRTYLANGKLTPRSQPNAVLSSEEAILNQVRQIARYGKVTSSDGFVIPIEADTLCVHGDNPNAVSLIARIRAALDE</sequence>
<reference key="1">
    <citation type="submission" date="2007-03" db="EMBL/GenBank/DDBJ databases">
        <authorList>
            <person name="Heidelberg J."/>
        </authorList>
    </citation>
    <scope>NUCLEOTIDE SEQUENCE [LARGE SCALE GENOMIC DNA]</scope>
    <source>
        <strain>ATCC 39541 / Classical Ogawa 395 / O395</strain>
    </source>
</reference>
<reference key="2">
    <citation type="journal article" date="2008" name="PLoS ONE">
        <title>A recalibrated molecular clock and independent origins for the cholera pandemic clones.</title>
        <authorList>
            <person name="Feng L."/>
            <person name="Reeves P.R."/>
            <person name="Lan R."/>
            <person name="Ren Y."/>
            <person name="Gao C."/>
            <person name="Zhou Z."/>
            <person name="Ren Y."/>
            <person name="Cheng J."/>
            <person name="Wang W."/>
            <person name="Wang J."/>
            <person name="Qian W."/>
            <person name="Li D."/>
            <person name="Wang L."/>
        </authorList>
    </citation>
    <scope>NUCLEOTIDE SEQUENCE [LARGE SCALE GENOMIC DNA]</scope>
    <source>
        <strain>ATCC 39541 / Classical Ogawa 395 / O395</strain>
    </source>
</reference>
<dbReference type="EC" id="3.5.2.9" evidence="1"/>
<dbReference type="EMBL" id="CP000626">
    <property type="protein sequence ID" value="ABQ18608.1"/>
    <property type="molecule type" value="Genomic_DNA"/>
</dbReference>
<dbReference type="EMBL" id="CP001236">
    <property type="protein sequence ID" value="ACP11373.1"/>
    <property type="molecule type" value="Genomic_DNA"/>
</dbReference>
<dbReference type="RefSeq" id="WP_001882609.1">
    <property type="nucleotide sequence ID" value="NZ_JAACZH010000025.1"/>
</dbReference>
<dbReference type="SMR" id="A5EZN1"/>
<dbReference type="KEGG" id="vco:VC0395_0716"/>
<dbReference type="KEGG" id="vcr:VC395_A0539"/>
<dbReference type="PATRIC" id="fig|345073.21.peg.3281"/>
<dbReference type="eggNOG" id="COG1540">
    <property type="taxonomic scope" value="Bacteria"/>
</dbReference>
<dbReference type="HOGENOM" id="CLU_069535_0_0_6"/>
<dbReference type="OrthoDB" id="9773478at2"/>
<dbReference type="Proteomes" id="UP000000249">
    <property type="component" value="Chromosome 1"/>
</dbReference>
<dbReference type="GO" id="GO:0017168">
    <property type="term" value="F:5-oxoprolinase (ATP-hydrolyzing) activity"/>
    <property type="evidence" value="ECO:0007669"/>
    <property type="project" value="UniProtKB-UniRule"/>
</dbReference>
<dbReference type="GO" id="GO:0005524">
    <property type="term" value="F:ATP binding"/>
    <property type="evidence" value="ECO:0007669"/>
    <property type="project" value="UniProtKB-UniRule"/>
</dbReference>
<dbReference type="GO" id="GO:0005975">
    <property type="term" value="P:carbohydrate metabolic process"/>
    <property type="evidence" value="ECO:0007669"/>
    <property type="project" value="InterPro"/>
</dbReference>
<dbReference type="CDD" id="cd10787">
    <property type="entry name" value="LamB_YcsF_like"/>
    <property type="match status" value="1"/>
</dbReference>
<dbReference type="Gene3D" id="3.20.20.370">
    <property type="entry name" value="Glycoside hydrolase/deacetylase"/>
    <property type="match status" value="1"/>
</dbReference>
<dbReference type="HAMAP" id="MF_00691">
    <property type="entry name" value="PxpA"/>
    <property type="match status" value="1"/>
</dbReference>
<dbReference type="InterPro" id="IPR011330">
    <property type="entry name" value="Glyco_hydro/deAcase_b/a-brl"/>
</dbReference>
<dbReference type="InterPro" id="IPR005501">
    <property type="entry name" value="LamB/YcsF/PxpA-like"/>
</dbReference>
<dbReference type="NCBIfam" id="NF003814">
    <property type="entry name" value="PRK05406.1-3"/>
    <property type="match status" value="1"/>
</dbReference>
<dbReference type="NCBIfam" id="NF003816">
    <property type="entry name" value="PRK05406.1-5"/>
    <property type="match status" value="1"/>
</dbReference>
<dbReference type="PANTHER" id="PTHR30292:SF0">
    <property type="entry name" value="5-OXOPROLINASE SUBUNIT A"/>
    <property type="match status" value="1"/>
</dbReference>
<dbReference type="PANTHER" id="PTHR30292">
    <property type="entry name" value="UNCHARACTERIZED PROTEIN YBGL-RELATED"/>
    <property type="match status" value="1"/>
</dbReference>
<dbReference type="Pfam" id="PF03746">
    <property type="entry name" value="LamB_YcsF"/>
    <property type="match status" value="1"/>
</dbReference>
<dbReference type="SUPFAM" id="SSF88713">
    <property type="entry name" value="Glycoside hydrolase/deacetylase"/>
    <property type="match status" value="1"/>
</dbReference>
<evidence type="ECO:0000255" key="1">
    <source>
        <dbReference type="HAMAP-Rule" id="MF_00691"/>
    </source>
</evidence>
<keyword id="KW-0067">ATP-binding</keyword>
<keyword id="KW-0378">Hydrolase</keyword>
<keyword id="KW-0547">Nucleotide-binding</keyword>
<organism>
    <name type="scientific">Vibrio cholerae serotype O1 (strain ATCC 39541 / Classical Ogawa 395 / O395)</name>
    <dbReference type="NCBI Taxonomy" id="345073"/>
    <lineage>
        <taxon>Bacteria</taxon>
        <taxon>Pseudomonadati</taxon>
        <taxon>Pseudomonadota</taxon>
        <taxon>Gammaproteobacteria</taxon>
        <taxon>Vibrionales</taxon>
        <taxon>Vibrionaceae</taxon>
        <taxon>Vibrio</taxon>
    </lineage>
</organism>
<accession>A5EZN1</accession>
<accession>C3M5G0</accession>
<comment type="function">
    <text evidence="1">Catalyzes the cleavage of 5-oxoproline to form L-glutamate coupled to the hydrolysis of ATP to ADP and inorganic phosphate.</text>
</comment>
<comment type="catalytic activity">
    <reaction evidence="1">
        <text>5-oxo-L-proline + ATP + 2 H2O = L-glutamate + ADP + phosphate + H(+)</text>
        <dbReference type="Rhea" id="RHEA:10348"/>
        <dbReference type="ChEBI" id="CHEBI:15377"/>
        <dbReference type="ChEBI" id="CHEBI:15378"/>
        <dbReference type="ChEBI" id="CHEBI:29985"/>
        <dbReference type="ChEBI" id="CHEBI:30616"/>
        <dbReference type="ChEBI" id="CHEBI:43474"/>
        <dbReference type="ChEBI" id="CHEBI:58402"/>
        <dbReference type="ChEBI" id="CHEBI:456216"/>
        <dbReference type="EC" id="3.5.2.9"/>
    </reaction>
</comment>
<comment type="subunit">
    <text evidence="1">Forms a complex composed of PxpA, PxpB and PxpC.</text>
</comment>
<comment type="similarity">
    <text evidence="1">Belongs to the LamB/PxpA family.</text>
</comment>
<feature type="chain" id="PRO_1000072748" description="5-oxoprolinase subunit A">
    <location>
        <begin position="1"/>
        <end position="246"/>
    </location>
</feature>
<proteinExistence type="inferred from homology"/>
<gene>
    <name evidence="1" type="primary">pxpA</name>
    <name type="ordered locus">VC0395_0716</name>
    <name type="ordered locus">VC395_A0539</name>
</gene>
<name>PXPA_VIBC3</name>
<protein>
    <recommendedName>
        <fullName evidence="1">5-oxoprolinase subunit A</fullName>
        <shortName evidence="1">5-OPase subunit A</shortName>
        <ecNumber evidence="1">3.5.2.9</ecNumber>
    </recommendedName>
    <alternativeName>
        <fullName evidence="1">5-oxoprolinase (ATP-hydrolyzing) subunit A</fullName>
    </alternativeName>
</protein>